<dbReference type="EMBL" id="AF298660">
    <property type="protein sequence ID" value="AAG17906.1"/>
    <property type="molecule type" value="Genomic_DNA"/>
</dbReference>
<dbReference type="EMBL" id="CP001956">
    <property type="protein sequence ID" value="ADE03673.1"/>
    <property type="molecule type" value="Genomic_DNA"/>
</dbReference>
<dbReference type="EMBL" id="AF029873">
    <property type="protein sequence ID" value="AAC38171.1"/>
    <property type="status" value="ALT_FRAME"/>
    <property type="molecule type" value="Genomic_DNA"/>
</dbReference>
<dbReference type="SMR" id="Q9HHA2"/>
<dbReference type="IntAct" id="Q9HHA2">
    <property type="interactions" value="14"/>
</dbReference>
<dbReference type="STRING" id="309800.HVO_0778"/>
<dbReference type="PaxDb" id="309800-C498_14843"/>
<dbReference type="EnsemblBacteria" id="ADE03673">
    <property type="protein sequence ID" value="ADE03673"/>
    <property type="gene ID" value="HVO_0778"/>
</dbReference>
<dbReference type="KEGG" id="hvo:HVO_0778"/>
<dbReference type="eggNOG" id="arCOG01257">
    <property type="taxonomic scope" value="Archaea"/>
</dbReference>
<dbReference type="HOGENOM" id="CLU_008891_7_3_2"/>
<dbReference type="BRENDA" id="5.6.1.7">
    <property type="organism ID" value="2561"/>
</dbReference>
<dbReference type="Proteomes" id="UP000008243">
    <property type="component" value="Chromosome"/>
</dbReference>
<dbReference type="GO" id="GO:0005524">
    <property type="term" value="F:ATP binding"/>
    <property type="evidence" value="ECO:0007669"/>
    <property type="project" value="UniProtKB-KW"/>
</dbReference>
<dbReference type="GO" id="GO:0016887">
    <property type="term" value="F:ATP hydrolysis activity"/>
    <property type="evidence" value="ECO:0007669"/>
    <property type="project" value="InterPro"/>
</dbReference>
<dbReference type="GO" id="GO:0140662">
    <property type="term" value="F:ATP-dependent protein folding chaperone"/>
    <property type="evidence" value="ECO:0007669"/>
    <property type="project" value="InterPro"/>
</dbReference>
<dbReference type="GO" id="GO:0051082">
    <property type="term" value="F:unfolded protein binding"/>
    <property type="evidence" value="ECO:0007669"/>
    <property type="project" value="InterPro"/>
</dbReference>
<dbReference type="CDD" id="cd03343">
    <property type="entry name" value="cpn60"/>
    <property type="match status" value="1"/>
</dbReference>
<dbReference type="Gene3D" id="3.50.7.10">
    <property type="entry name" value="GroEL"/>
    <property type="match status" value="1"/>
</dbReference>
<dbReference type="Gene3D" id="1.10.560.10">
    <property type="entry name" value="GroEL-like equatorial domain"/>
    <property type="match status" value="1"/>
</dbReference>
<dbReference type="Gene3D" id="3.30.260.10">
    <property type="entry name" value="TCP-1-like chaperonin intermediate domain"/>
    <property type="match status" value="1"/>
</dbReference>
<dbReference type="InterPro" id="IPR017998">
    <property type="entry name" value="Chaperone_TCP-1"/>
</dbReference>
<dbReference type="InterPro" id="IPR002194">
    <property type="entry name" value="Chaperonin_TCP-1_CS"/>
</dbReference>
<dbReference type="InterPro" id="IPR002423">
    <property type="entry name" value="Cpn60/GroEL/TCP-1"/>
</dbReference>
<dbReference type="InterPro" id="IPR027409">
    <property type="entry name" value="GroEL-like_apical_dom_sf"/>
</dbReference>
<dbReference type="InterPro" id="IPR027413">
    <property type="entry name" value="GROEL-like_equatorial_sf"/>
</dbReference>
<dbReference type="InterPro" id="IPR027410">
    <property type="entry name" value="TCP-1-like_intermed_sf"/>
</dbReference>
<dbReference type="InterPro" id="IPR053374">
    <property type="entry name" value="TCP-1_chaperonin"/>
</dbReference>
<dbReference type="InterPro" id="IPR054827">
    <property type="entry name" value="thermosome_alpha"/>
</dbReference>
<dbReference type="InterPro" id="IPR012714">
    <property type="entry name" value="Thermosome_arc"/>
</dbReference>
<dbReference type="NCBIfam" id="NF041082">
    <property type="entry name" value="thermosome_alpha"/>
    <property type="match status" value="1"/>
</dbReference>
<dbReference type="NCBIfam" id="TIGR02339">
    <property type="entry name" value="thermosome_arch"/>
    <property type="match status" value="1"/>
</dbReference>
<dbReference type="NCBIfam" id="NF041083">
    <property type="entry name" value="thermosome_beta"/>
    <property type="match status" value="1"/>
</dbReference>
<dbReference type="PANTHER" id="PTHR11353">
    <property type="entry name" value="CHAPERONIN"/>
    <property type="match status" value="1"/>
</dbReference>
<dbReference type="Pfam" id="PF00118">
    <property type="entry name" value="Cpn60_TCP1"/>
    <property type="match status" value="1"/>
</dbReference>
<dbReference type="PRINTS" id="PR00304">
    <property type="entry name" value="TCOMPLEXTCP1"/>
</dbReference>
<dbReference type="SUPFAM" id="SSF52029">
    <property type="entry name" value="GroEL apical domain-like"/>
    <property type="match status" value="1"/>
</dbReference>
<dbReference type="SUPFAM" id="SSF48592">
    <property type="entry name" value="GroEL equatorial domain-like"/>
    <property type="match status" value="1"/>
</dbReference>
<dbReference type="SUPFAM" id="SSF54849">
    <property type="entry name" value="GroEL-intermediate domain like"/>
    <property type="match status" value="1"/>
</dbReference>
<dbReference type="PROSITE" id="PS00750">
    <property type="entry name" value="TCP1_1"/>
    <property type="match status" value="1"/>
</dbReference>
<dbReference type="PROSITE" id="PS00751">
    <property type="entry name" value="TCP1_2"/>
    <property type="match status" value="1"/>
</dbReference>
<dbReference type="PROSITE" id="PS00995">
    <property type="entry name" value="TCP1_3"/>
    <property type="match status" value="1"/>
</dbReference>
<evidence type="ECO:0000269" key="1">
    <source>
    </source>
</evidence>
<evidence type="ECO:0000269" key="2">
    <source>
    </source>
</evidence>
<evidence type="ECO:0000305" key="3"/>
<name>THS3_HALVD</name>
<keyword id="KW-0067">ATP-binding</keyword>
<keyword id="KW-0143">Chaperone</keyword>
<keyword id="KW-0547">Nucleotide-binding</keyword>
<keyword id="KW-1185">Reference proteome</keyword>
<keyword id="KW-0346">Stress response</keyword>
<proteinExistence type="evidence at protein level"/>
<feature type="chain" id="PRO_0000128389" description="Thermosome subunit 3">
    <location>
        <begin position="1"/>
        <end position="524"/>
    </location>
</feature>
<feature type="sequence conflict" description="In Ref. 1; AAG17906." evidence="3" ref="1">
    <original>R</original>
    <variation>K</variation>
    <location>
        <position position="368"/>
    </location>
</feature>
<feature type="sequence conflict" description="In Ref. 1; AAG17906." evidence="3" ref="1">
    <original>D</original>
    <variation>Y</variation>
    <location>
        <position position="383"/>
    </location>
</feature>
<sequence length="524" mass="55242">MASRMQQPLYILAEGTNRTHGRSAQDSNIRAGKAVAEAVRTTLGPRGMDKMLVDSSGEVVITNDGATILEKMDIEHPAAQMLVEVSQTQEEEVGDGTTTAAVLTGELLAHAEDLLDDDLHPTVIVEGYTEAARIAQDAIDDMVLDVTLDDDLLRKVAESSMTGKGTGDVTADVLAKHVVKAVQMVHEDDNGVFHRDDVRVLTRTGASSSATELVEGVVLDKEPVNENMPRSVSDATVAVLDMKLDVRKSEVDTEYNITSVDQLTAAIDAEDSELRGYAKALADAGVDVVFCTKSIDDRVAGFLADAGILAFKSVKKSDARALARATGAKRLGSLSDLDESDLGRVDAVSIRSFGDDDLAFVEGGAAARAVTLFLRGGTEHVVDELERAIEDAVDVVVAAIDKGGVVPGAGATEIAIADRIRSEAAGIEGRKQLAVEAYADAVEALPRTLAENTGMDPIDALVDLRARYETEGLAGIISSGRSGEIGDPVELGVIDPVAVKREAIESATEAATMIVRIDDVIAAK</sequence>
<comment type="function">
    <text evidence="2 3">Molecular chaperone that assists in the folding or refolding of nascent or denatured proteins along with ATP hydrolysis (Probable). ATPase activity is highest in thermosome assemblies containing CCT1:CCT2, followed by assemblies containing CCT1:CCT2:CCT3. Not required for thermosome ATPase activity. Not required for growth.</text>
</comment>
<comment type="subunit">
    <text evidence="1 2">The thermosome or CCT complex is a oligomeric complex of two octameric double-ring structures; the complex is probably a heterooligomer of CCT1, CCT2 and CCT3 with yet unknown stoichiometry.</text>
</comment>
<comment type="induction">
    <text evidence="1">By heat shock (at protein level).</text>
</comment>
<comment type="miscellaneous">
    <text>Cannot be stably overexpressed.</text>
</comment>
<comment type="similarity">
    <text evidence="3">Belongs to the TCP-1 chaperonin family.</text>
</comment>
<comment type="sequence caution" evidence="3">
    <conflict type="frameshift">
        <sequence resource="EMBL-CDS" id="AAC38171"/>
    </conflict>
</comment>
<organism>
    <name type="scientific">Haloferax volcanii (strain ATCC 29605 / DSM 3757 / JCM 8879 / NBRC 14742 / NCIMB 2012 / VKM B-1768 / DS2)</name>
    <name type="common">Halobacterium volcanii</name>
    <dbReference type="NCBI Taxonomy" id="309800"/>
    <lineage>
        <taxon>Archaea</taxon>
        <taxon>Methanobacteriati</taxon>
        <taxon>Methanobacteriota</taxon>
        <taxon>Stenosarchaea group</taxon>
        <taxon>Halobacteria</taxon>
        <taxon>Halobacteriales</taxon>
        <taxon>Haloferacaceae</taxon>
        <taxon>Haloferax</taxon>
    </lineage>
</organism>
<reference key="1">
    <citation type="journal article" date="2002" name="FEBS Lett.">
        <title>Properties of the chaperonin complex from the halophilic archaeon Haloferax volcanii.</title>
        <authorList>
            <person name="Large A.T."/>
            <person name="Kovacs E."/>
            <person name="Lund P.A."/>
        </authorList>
    </citation>
    <scope>NUCLEOTIDE SEQUENCE [GENOMIC DNA]</scope>
    <scope>ATPASE ACTIVITY</scope>
    <scope>SUBUNIT</scope>
    <scope>INDUCTION</scope>
    <source>
        <strain>DS2 / DS70</strain>
    </source>
</reference>
<reference key="2">
    <citation type="journal article" date="2010" name="PLoS ONE">
        <title>The complete genome sequence of Haloferax volcanii DS2, a model archaeon.</title>
        <authorList>
            <person name="Hartman A.L."/>
            <person name="Norais C."/>
            <person name="Badger J.H."/>
            <person name="Delmas S."/>
            <person name="Haldenby S."/>
            <person name="Madupu R."/>
            <person name="Robinson J."/>
            <person name="Khouri H."/>
            <person name="Ren Q."/>
            <person name="Lowe T.M."/>
            <person name="Maupin-Furlow J."/>
            <person name="Pohlschroder M."/>
            <person name="Daniels C."/>
            <person name="Pfeiffer F."/>
            <person name="Allers T."/>
            <person name="Eisen J.A."/>
        </authorList>
    </citation>
    <scope>NUCLEOTIDE SEQUENCE [LARGE SCALE GENOMIC DNA]</scope>
    <source>
        <strain>ATCC 29605 / DSM 3757 / JCM 8879 / NBRC 14742 / NCIMB 2012 / VKM B-1768 / DS2</strain>
    </source>
</reference>
<reference key="3">
    <citation type="journal article" date="1998" name="Mol. Microbiol.">
        <title>Heat shock inducibility of an archaeal TATA-like promoter is controlled by adjacent sequence elements.</title>
        <authorList>
            <person name="Thompson D.K."/>
            <person name="Daniels C.J."/>
        </authorList>
    </citation>
    <scope>NUCLEOTIDE SEQUENCE [GENOMIC DNA] OF 1-54</scope>
    <source>
        <strain>ATCC 29605 / DSM 3757 / JCM 8879 / NBRC 14742 / NCIMB 2012 / VKM B-1768 / DS2</strain>
    </source>
</reference>
<reference key="4">
    <citation type="journal article" date="2006" name="Mol. Microbiol.">
        <title>All three chaperonin genes in the archaeon Haloferax volcanii are individually dispensable.</title>
        <authorList>
            <person name="Kapatai G."/>
            <person name="Large A."/>
            <person name="Benesch J.L."/>
            <person name="Robinson C.V."/>
            <person name="Carrascosa J.L."/>
            <person name="Valpuesta J.M."/>
            <person name="Gowrinathan P."/>
            <person name="Lund P.A."/>
        </authorList>
    </citation>
    <scope>FUNCTION</scope>
    <scope>SUBUNIT</scope>
    <scope>ELECTRON MICROSCOPY OF THE THERMOSOME</scope>
    <source>
        <strain>DS2 / DS70</strain>
    </source>
</reference>
<accession>Q9HHA2</accession>
<accession>D4GTT3</accession>
<accession>O31124</accession>
<gene>
    <name type="primary">cct3</name>
    <name type="ordered locus">HVO_0778</name>
</gene>
<protein>
    <recommendedName>
        <fullName>Thermosome subunit 3</fullName>
    </recommendedName>
    <alternativeName>
        <fullName>Heat shock protein CCT3</fullName>
    </alternativeName>
</protein>